<name>RUVC_CHLAB</name>
<sequence>MIMGIDPGTLVSGYAIILVEQRYKIRAHSYGAIRLSSKDSLTQRYKQLFQTLSGVLDNVTPDAVVLETQYVHKNPQSAIKLGMGRGVLVLAAALRDIPVFEYTPNVAKRAVVGKGNASKQQVQLMVSKILNIPDVLNSDCEDIADAFALAICHAHTSAYTCLGVR</sequence>
<organism>
    <name type="scientific">Chlamydia abortus (strain DSM 27085 / S26/3)</name>
    <name type="common">Chlamydophila abortus</name>
    <dbReference type="NCBI Taxonomy" id="218497"/>
    <lineage>
        <taxon>Bacteria</taxon>
        <taxon>Pseudomonadati</taxon>
        <taxon>Chlamydiota</taxon>
        <taxon>Chlamydiia</taxon>
        <taxon>Chlamydiales</taxon>
        <taxon>Chlamydiaceae</taxon>
        <taxon>Chlamydia/Chlamydophila group</taxon>
        <taxon>Chlamydia</taxon>
    </lineage>
</organism>
<protein>
    <recommendedName>
        <fullName evidence="1">Crossover junction endodeoxyribonuclease RuvC</fullName>
        <ecNumber evidence="1">3.1.21.10</ecNumber>
    </recommendedName>
    <alternativeName>
        <fullName evidence="1">Holliday junction nuclease RuvC</fullName>
    </alternativeName>
    <alternativeName>
        <fullName evidence="1">Holliday junction resolvase RuvC</fullName>
    </alternativeName>
</protein>
<gene>
    <name evidence="1" type="primary">ruvC</name>
    <name type="ordered locus">CAB118</name>
</gene>
<keyword id="KW-0963">Cytoplasm</keyword>
<keyword id="KW-0227">DNA damage</keyword>
<keyword id="KW-0233">DNA recombination</keyword>
<keyword id="KW-0234">DNA repair</keyword>
<keyword id="KW-0238">DNA-binding</keyword>
<keyword id="KW-0255">Endonuclease</keyword>
<keyword id="KW-0378">Hydrolase</keyword>
<keyword id="KW-0460">Magnesium</keyword>
<keyword id="KW-0479">Metal-binding</keyword>
<keyword id="KW-0540">Nuclease</keyword>
<comment type="function">
    <text evidence="1">The RuvA-RuvB-RuvC complex processes Holliday junction (HJ) DNA during genetic recombination and DNA repair. Endonuclease that resolves HJ intermediates. Cleaves cruciform DNA by making single-stranded nicks across the HJ at symmetrical positions within the homologous arms, yielding a 5'-phosphate and a 3'-hydroxyl group; requires a central core of homology in the junction. The consensus cleavage sequence is 5'-(A/T)TT(C/G)-3'. Cleavage occurs on the 3'-side of the TT dinucleotide at the point of strand exchange. HJ branch migration catalyzed by RuvA-RuvB allows RuvC to scan DNA until it finds its consensus sequence, where it cleaves and resolves the cruciform DNA.</text>
</comment>
<comment type="catalytic activity">
    <reaction evidence="1">
        <text>Endonucleolytic cleavage at a junction such as a reciprocal single-stranded crossover between two homologous DNA duplexes (Holliday junction).</text>
        <dbReference type="EC" id="3.1.21.10"/>
    </reaction>
</comment>
<comment type="cofactor">
    <cofactor evidence="1">
        <name>Mg(2+)</name>
        <dbReference type="ChEBI" id="CHEBI:18420"/>
    </cofactor>
    <text evidence="1">Binds 2 Mg(2+) ion per subunit.</text>
</comment>
<comment type="subunit">
    <text evidence="1">Homodimer which binds Holliday junction (HJ) DNA. The HJ becomes 2-fold symmetrical on binding to RuvC with unstacked arms; it has a different conformation from HJ DNA in complex with RuvA. In the full resolvosome a probable DNA-RuvA(4)-RuvB(12)-RuvC(2) complex forms which resolves the HJ.</text>
</comment>
<comment type="subcellular location">
    <subcellularLocation>
        <location evidence="1">Cytoplasm</location>
    </subcellularLocation>
</comment>
<comment type="similarity">
    <text evidence="1">Belongs to the RuvC family.</text>
</comment>
<evidence type="ECO:0000255" key="1">
    <source>
        <dbReference type="HAMAP-Rule" id="MF_00034"/>
    </source>
</evidence>
<dbReference type="EC" id="3.1.21.10" evidence="1"/>
<dbReference type="EMBL" id="CR848038">
    <property type="protein sequence ID" value="CAH63576.1"/>
    <property type="molecule type" value="Genomic_DNA"/>
</dbReference>
<dbReference type="SMR" id="Q5L6Z4"/>
<dbReference type="KEGG" id="cab:CAB118"/>
<dbReference type="eggNOG" id="COG0817">
    <property type="taxonomic scope" value="Bacteria"/>
</dbReference>
<dbReference type="HOGENOM" id="CLU_091257_3_0_0"/>
<dbReference type="Proteomes" id="UP000001012">
    <property type="component" value="Chromosome"/>
</dbReference>
<dbReference type="GO" id="GO:0005737">
    <property type="term" value="C:cytoplasm"/>
    <property type="evidence" value="ECO:0007669"/>
    <property type="project" value="UniProtKB-SubCell"/>
</dbReference>
<dbReference type="GO" id="GO:0048476">
    <property type="term" value="C:Holliday junction resolvase complex"/>
    <property type="evidence" value="ECO:0007669"/>
    <property type="project" value="UniProtKB-UniRule"/>
</dbReference>
<dbReference type="GO" id="GO:0008821">
    <property type="term" value="F:crossover junction DNA endonuclease activity"/>
    <property type="evidence" value="ECO:0007669"/>
    <property type="project" value="UniProtKB-UniRule"/>
</dbReference>
<dbReference type="GO" id="GO:0003677">
    <property type="term" value="F:DNA binding"/>
    <property type="evidence" value="ECO:0007669"/>
    <property type="project" value="UniProtKB-KW"/>
</dbReference>
<dbReference type="GO" id="GO:0000287">
    <property type="term" value="F:magnesium ion binding"/>
    <property type="evidence" value="ECO:0007669"/>
    <property type="project" value="UniProtKB-UniRule"/>
</dbReference>
<dbReference type="GO" id="GO:0006310">
    <property type="term" value="P:DNA recombination"/>
    <property type="evidence" value="ECO:0007669"/>
    <property type="project" value="UniProtKB-UniRule"/>
</dbReference>
<dbReference type="GO" id="GO:0006281">
    <property type="term" value="P:DNA repair"/>
    <property type="evidence" value="ECO:0007669"/>
    <property type="project" value="UniProtKB-UniRule"/>
</dbReference>
<dbReference type="CDD" id="cd16962">
    <property type="entry name" value="RuvC"/>
    <property type="match status" value="1"/>
</dbReference>
<dbReference type="FunFam" id="3.30.420.10:FF:000002">
    <property type="entry name" value="Crossover junction endodeoxyribonuclease RuvC"/>
    <property type="match status" value="1"/>
</dbReference>
<dbReference type="Gene3D" id="3.30.420.10">
    <property type="entry name" value="Ribonuclease H-like superfamily/Ribonuclease H"/>
    <property type="match status" value="1"/>
</dbReference>
<dbReference type="HAMAP" id="MF_00034">
    <property type="entry name" value="RuvC"/>
    <property type="match status" value="1"/>
</dbReference>
<dbReference type="InterPro" id="IPR012337">
    <property type="entry name" value="RNaseH-like_sf"/>
</dbReference>
<dbReference type="InterPro" id="IPR036397">
    <property type="entry name" value="RNaseH_sf"/>
</dbReference>
<dbReference type="InterPro" id="IPR020563">
    <property type="entry name" value="X-over_junc_endoDNase_Mg_BS"/>
</dbReference>
<dbReference type="InterPro" id="IPR002176">
    <property type="entry name" value="X-over_junc_endoDNase_RuvC"/>
</dbReference>
<dbReference type="NCBIfam" id="TIGR00228">
    <property type="entry name" value="ruvC"/>
    <property type="match status" value="1"/>
</dbReference>
<dbReference type="PANTHER" id="PTHR30194">
    <property type="entry name" value="CROSSOVER JUNCTION ENDODEOXYRIBONUCLEASE RUVC"/>
    <property type="match status" value="1"/>
</dbReference>
<dbReference type="PANTHER" id="PTHR30194:SF3">
    <property type="entry name" value="CROSSOVER JUNCTION ENDODEOXYRIBONUCLEASE RUVC"/>
    <property type="match status" value="1"/>
</dbReference>
<dbReference type="Pfam" id="PF02075">
    <property type="entry name" value="RuvC"/>
    <property type="match status" value="1"/>
</dbReference>
<dbReference type="PRINTS" id="PR00696">
    <property type="entry name" value="RSOLVASERUVC"/>
</dbReference>
<dbReference type="SUPFAM" id="SSF53098">
    <property type="entry name" value="Ribonuclease H-like"/>
    <property type="match status" value="1"/>
</dbReference>
<dbReference type="PROSITE" id="PS01321">
    <property type="entry name" value="RUVC"/>
    <property type="match status" value="1"/>
</dbReference>
<proteinExistence type="inferred from homology"/>
<reference key="1">
    <citation type="journal article" date="2005" name="Genome Res.">
        <title>The Chlamydophila abortus genome sequence reveals an array of variable proteins that contribute to interspecies variation.</title>
        <authorList>
            <person name="Thomson N.R."/>
            <person name="Yeats C."/>
            <person name="Bell K."/>
            <person name="Holden M.T.G."/>
            <person name="Bentley S.D."/>
            <person name="Livingstone M."/>
            <person name="Cerdeno-Tarraga A.-M."/>
            <person name="Harris B."/>
            <person name="Doggett J."/>
            <person name="Ormond D."/>
            <person name="Mungall K."/>
            <person name="Clarke K."/>
            <person name="Feltwell T."/>
            <person name="Hance Z."/>
            <person name="Sanders M."/>
            <person name="Quail M.A."/>
            <person name="Price C."/>
            <person name="Barrell B.G."/>
            <person name="Parkhill J."/>
            <person name="Longbottom D."/>
        </authorList>
    </citation>
    <scope>NUCLEOTIDE SEQUENCE [LARGE SCALE GENOMIC DNA]</scope>
    <source>
        <strain>DSM 27085 / S26/3</strain>
    </source>
</reference>
<accession>Q5L6Z4</accession>
<feature type="chain" id="PRO_0000225131" description="Crossover junction endodeoxyribonuclease RuvC">
    <location>
        <begin position="1"/>
        <end position="165"/>
    </location>
</feature>
<feature type="active site" evidence="1">
    <location>
        <position position="6"/>
    </location>
</feature>
<feature type="active site" evidence="1">
    <location>
        <position position="67"/>
    </location>
</feature>
<feature type="active site" evidence="1">
    <location>
        <position position="142"/>
    </location>
</feature>
<feature type="binding site" evidence="1">
    <location>
        <position position="6"/>
    </location>
    <ligand>
        <name>Mg(2+)</name>
        <dbReference type="ChEBI" id="CHEBI:18420"/>
        <label>1</label>
    </ligand>
</feature>
<feature type="binding site" evidence="1">
    <location>
        <position position="67"/>
    </location>
    <ligand>
        <name>Mg(2+)</name>
        <dbReference type="ChEBI" id="CHEBI:18420"/>
        <label>2</label>
    </ligand>
</feature>
<feature type="binding site" evidence="1">
    <location>
        <position position="142"/>
    </location>
    <ligand>
        <name>Mg(2+)</name>
        <dbReference type="ChEBI" id="CHEBI:18420"/>
        <label>1</label>
    </ligand>
</feature>